<feature type="chain" id="PRO_1000097034" description="Pantothenate synthetase">
    <location>
        <begin position="1"/>
        <end position="279"/>
    </location>
</feature>
<feature type="active site" description="Proton donor" evidence="1">
    <location>
        <position position="33"/>
    </location>
</feature>
<feature type="binding site" evidence="1">
    <location>
        <begin position="26"/>
        <end position="33"/>
    </location>
    <ligand>
        <name>ATP</name>
        <dbReference type="ChEBI" id="CHEBI:30616"/>
    </ligand>
</feature>
<feature type="binding site" evidence="1">
    <location>
        <position position="57"/>
    </location>
    <ligand>
        <name>(R)-pantoate</name>
        <dbReference type="ChEBI" id="CHEBI:15980"/>
    </ligand>
</feature>
<feature type="binding site" evidence="1">
    <location>
        <position position="57"/>
    </location>
    <ligand>
        <name>beta-alanine</name>
        <dbReference type="ChEBI" id="CHEBI:57966"/>
    </ligand>
</feature>
<feature type="binding site" evidence="1">
    <location>
        <begin position="144"/>
        <end position="147"/>
    </location>
    <ligand>
        <name>ATP</name>
        <dbReference type="ChEBI" id="CHEBI:30616"/>
    </ligand>
</feature>
<feature type="binding site" evidence="1">
    <location>
        <position position="150"/>
    </location>
    <ligand>
        <name>(R)-pantoate</name>
        <dbReference type="ChEBI" id="CHEBI:15980"/>
    </ligand>
</feature>
<feature type="binding site" evidence="1">
    <location>
        <position position="173"/>
    </location>
    <ligand>
        <name>ATP</name>
        <dbReference type="ChEBI" id="CHEBI:30616"/>
    </ligand>
</feature>
<feature type="binding site" evidence="1">
    <location>
        <begin position="181"/>
        <end position="184"/>
    </location>
    <ligand>
        <name>ATP</name>
        <dbReference type="ChEBI" id="CHEBI:30616"/>
    </ligand>
</feature>
<protein>
    <recommendedName>
        <fullName evidence="1">Pantothenate synthetase</fullName>
        <shortName evidence="1">PS</shortName>
        <ecNumber evidence="1">6.3.2.1</ecNumber>
    </recommendedName>
    <alternativeName>
        <fullName evidence="1">Pantoate--beta-alanine ligase</fullName>
    </alternativeName>
    <alternativeName>
        <fullName evidence="1">Pantoate-activating enzyme</fullName>
    </alternativeName>
</protein>
<name>PANC_BURO0</name>
<sequence>MKVISSIQELRDQLRGQNRTAFVPTMGNLHEGHLSLMRLARQHGDPVVASIFVNRLQFGPNEDFDKYPRTLQDDIEKLQQNNVYVLFAPTERDMYPEPQEYRVLPPDDLGGILEGEFRPGFFAGVCTVVTKLMSCVQPRVAVFGKKDYQQLMIVRRMCQQLALPVEIIAAETVRDEDGLALSSRNRYLTTDERKEAPELAKTLQRVRDSVLGGERDLGKLEQQAHTHLAERGWVPDYIAIRRRANLIAPSAAELEAGEPLVVLAAAKLGATRLIDNLEI</sequence>
<organism>
    <name type="scientific">Burkholderia orbicola (strain MC0-3)</name>
    <dbReference type="NCBI Taxonomy" id="406425"/>
    <lineage>
        <taxon>Bacteria</taxon>
        <taxon>Pseudomonadati</taxon>
        <taxon>Pseudomonadota</taxon>
        <taxon>Betaproteobacteria</taxon>
        <taxon>Burkholderiales</taxon>
        <taxon>Burkholderiaceae</taxon>
        <taxon>Burkholderia</taxon>
        <taxon>Burkholderia cepacia complex</taxon>
        <taxon>Burkholderia orbicola</taxon>
    </lineage>
</organism>
<keyword id="KW-0067">ATP-binding</keyword>
<keyword id="KW-0963">Cytoplasm</keyword>
<keyword id="KW-0436">Ligase</keyword>
<keyword id="KW-0547">Nucleotide-binding</keyword>
<keyword id="KW-0566">Pantothenate biosynthesis</keyword>
<evidence type="ECO:0000255" key="1">
    <source>
        <dbReference type="HAMAP-Rule" id="MF_00158"/>
    </source>
</evidence>
<dbReference type="EC" id="6.3.2.1" evidence="1"/>
<dbReference type="EMBL" id="CP000958">
    <property type="protein sequence ID" value="ACA91608.1"/>
    <property type="molecule type" value="Genomic_DNA"/>
</dbReference>
<dbReference type="RefSeq" id="WP_012329012.1">
    <property type="nucleotide sequence ID" value="NC_010508.1"/>
</dbReference>
<dbReference type="SMR" id="B1JWS8"/>
<dbReference type="GeneID" id="83049237"/>
<dbReference type="KEGG" id="bcm:Bcenmc03_2447"/>
<dbReference type="HOGENOM" id="CLU_047148_0_0_4"/>
<dbReference type="UniPathway" id="UPA00028">
    <property type="reaction ID" value="UER00005"/>
</dbReference>
<dbReference type="Proteomes" id="UP000002169">
    <property type="component" value="Chromosome 1"/>
</dbReference>
<dbReference type="GO" id="GO:0005829">
    <property type="term" value="C:cytosol"/>
    <property type="evidence" value="ECO:0007669"/>
    <property type="project" value="TreeGrafter"/>
</dbReference>
<dbReference type="GO" id="GO:0005524">
    <property type="term" value="F:ATP binding"/>
    <property type="evidence" value="ECO:0007669"/>
    <property type="project" value="UniProtKB-KW"/>
</dbReference>
<dbReference type="GO" id="GO:0004592">
    <property type="term" value="F:pantoate-beta-alanine ligase activity"/>
    <property type="evidence" value="ECO:0007669"/>
    <property type="project" value="UniProtKB-UniRule"/>
</dbReference>
<dbReference type="GO" id="GO:0015940">
    <property type="term" value="P:pantothenate biosynthetic process"/>
    <property type="evidence" value="ECO:0007669"/>
    <property type="project" value="UniProtKB-UniRule"/>
</dbReference>
<dbReference type="CDD" id="cd00560">
    <property type="entry name" value="PanC"/>
    <property type="match status" value="1"/>
</dbReference>
<dbReference type="Gene3D" id="3.40.50.620">
    <property type="entry name" value="HUPs"/>
    <property type="match status" value="1"/>
</dbReference>
<dbReference type="Gene3D" id="3.30.1300.10">
    <property type="entry name" value="Pantoate-beta-alanine ligase, C-terminal domain"/>
    <property type="match status" value="1"/>
</dbReference>
<dbReference type="HAMAP" id="MF_00158">
    <property type="entry name" value="PanC"/>
    <property type="match status" value="1"/>
</dbReference>
<dbReference type="InterPro" id="IPR004821">
    <property type="entry name" value="Cyt_trans-like"/>
</dbReference>
<dbReference type="InterPro" id="IPR003721">
    <property type="entry name" value="Pantoate_ligase"/>
</dbReference>
<dbReference type="InterPro" id="IPR042176">
    <property type="entry name" value="Pantoate_ligase_C"/>
</dbReference>
<dbReference type="InterPro" id="IPR014729">
    <property type="entry name" value="Rossmann-like_a/b/a_fold"/>
</dbReference>
<dbReference type="NCBIfam" id="TIGR00125">
    <property type="entry name" value="cyt_tran_rel"/>
    <property type="match status" value="1"/>
</dbReference>
<dbReference type="NCBIfam" id="TIGR00018">
    <property type="entry name" value="panC"/>
    <property type="match status" value="1"/>
</dbReference>
<dbReference type="PANTHER" id="PTHR21299">
    <property type="entry name" value="CYTIDYLATE KINASE/PANTOATE-BETA-ALANINE LIGASE"/>
    <property type="match status" value="1"/>
</dbReference>
<dbReference type="PANTHER" id="PTHR21299:SF1">
    <property type="entry name" value="PANTOATE--BETA-ALANINE LIGASE"/>
    <property type="match status" value="1"/>
</dbReference>
<dbReference type="Pfam" id="PF02569">
    <property type="entry name" value="Pantoate_ligase"/>
    <property type="match status" value="1"/>
</dbReference>
<dbReference type="SUPFAM" id="SSF52374">
    <property type="entry name" value="Nucleotidylyl transferase"/>
    <property type="match status" value="1"/>
</dbReference>
<proteinExistence type="inferred from homology"/>
<accession>B1JWS8</accession>
<reference key="1">
    <citation type="submission" date="2008-02" db="EMBL/GenBank/DDBJ databases">
        <title>Complete sequence of chromosome 1 of Burkholderia cenocepacia MC0-3.</title>
        <authorList>
            <person name="Copeland A."/>
            <person name="Lucas S."/>
            <person name="Lapidus A."/>
            <person name="Barry K."/>
            <person name="Bruce D."/>
            <person name="Goodwin L."/>
            <person name="Glavina del Rio T."/>
            <person name="Dalin E."/>
            <person name="Tice H."/>
            <person name="Pitluck S."/>
            <person name="Chain P."/>
            <person name="Malfatti S."/>
            <person name="Shin M."/>
            <person name="Vergez L."/>
            <person name="Schmutz J."/>
            <person name="Larimer F."/>
            <person name="Land M."/>
            <person name="Hauser L."/>
            <person name="Kyrpides N."/>
            <person name="Mikhailova N."/>
            <person name="Tiedje J."/>
            <person name="Richardson P."/>
        </authorList>
    </citation>
    <scope>NUCLEOTIDE SEQUENCE [LARGE SCALE GENOMIC DNA]</scope>
    <source>
        <strain>MC0-3</strain>
    </source>
</reference>
<comment type="function">
    <text evidence="1">Catalyzes the condensation of pantoate with beta-alanine in an ATP-dependent reaction via a pantoyl-adenylate intermediate.</text>
</comment>
<comment type="catalytic activity">
    <reaction evidence="1">
        <text>(R)-pantoate + beta-alanine + ATP = (R)-pantothenate + AMP + diphosphate + H(+)</text>
        <dbReference type="Rhea" id="RHEA:10912"/>
        <dbReference type="ChEBI" id="CHEBI:15378"/>
        <dbReference type="ChEBI" id="CHEBI:15980"/>
        <dbReference type="ChEBI" id="CHEBI:29032"/>
        <dbReference type="ChEBI" id="CHEBI:30616"/>
        <dbReference type="ChEBI" id="CHEBI:33019"/>
        <dbReference type="ChEBI" id="CHEBI:57966"/>
        <dbReference type="ChEBI" id="CHEBI:456215"/>
        <dbReference type="EC" id="6.3.2.1"/>
    </reaction>
</comment>
<comment type="pathway">
    <text evidence="1">Cofactor biosynthesis; (R)-pantothenate biosynthesis; (R)-pantothenate from (R)-pantoate and beta-alanine: step 1/1.</text>
</comment>
<comment type="subunit">
    <text evidence="1">Homodimer.</text>
</comment>
<comment type="subcellular location">
    <subcellularLocation>
        <location evidence="1">Cytoplasm</location>
    </subcellularLocation>
</comment>
<comment type="miscellaneous">
    <text evidence="1">The reaction proceeds by a bi uni uni bi ping pong mechanism.</text>
</comment>
<comment type="similarity">
    <text evidence="1">Belongs to the pantothenate synthetase family.</text>
</comment>
<gene>
    <name evidence="1" type="primary">panC</name>
    <name type="ordered locus">Bcenmc03_2447</name>
</gene>